<keyword id="KW-1003">Cell membrane</keyword>
<keyword id="KW-0217">Developmental protein</keyword>
<keyword id="KW-0325">Glycoprotein</keyword>
<keyword id="KW-0472">Membrane</keyword>
<keyword id="KW-1185">Reference proteome</keyword>
<keyword id="KW-0812">Transmembrane</keyword>
<keyword id="KW-1133">Transmembrane helix</keyword>
<evidence type="ECO:0000250" key="1">
    <source>
        <dbReference type="UniProtKB" id="Q6X5V0"/>
    </source>
</evidence>
<evidence type="ECO:0000250" key="2">
    <source>
        <dbReference type="UniProtKB" id="Q7XXN8"/>
    </source>
</evidence>
<evidence type="ECO:0000255" key="3"/>
<evidence type="ECO:0000255" key="4">
    <source>
        <dbReference type="PROSITE-ProRule" id="PRU00498"/>
    </source>
</evidence>
<evidence type="ECO:0000303" key="5">
    <source>
    </source>
</evidence>
<evidence type="ECO:0000303" key="6">
    <source>
    </source>
</evidence>
<evidence type="ECO:0000305" key="7"/>
<evidence type="ECO:0000312" key="8">
    <source>
        <dbReference type="Araport" id="AT1G64585"/>
    </source>
</evidence>
<evidence type="ECO:0000312" key="9">
    <source>
        <dbReference type="EMBL" id="AC009519"/>
    </source>
</evidence>
<organism>
    <name type="scientific">Arabidopsis thaliana</name>
    <name type="common">Mouse-ear cress</name>
    <dbReference type="NCBI Taxonomy" id="3702"/>
    <lineage>
        <taxon>Eukaryota</taxon>
        <taxon>Viridiplantae</taxon>
        <taxon>Streptophyta</taxon>
        <taxon>Embryophyta</taxon>
        <taxon>Tracheophyta</taxon>
        <taxon>Spermatophyta</taxon>
        <taxon>Magnoliopsida</taxon>
        <taxon>eudicotyledons</taxon>
        <taxon>Gunneridae</taxon>
        <taxon>Pentapetalae</taxon>
        <taxon>rosids</taxon>
        <taxon>malvids</taxon>
        <taxon>Brassicales</taxon>
        <taxon>Brassicaceae</taxon>
        <taxon>Camelineae</taxon>
        <taxon>Arabidopsis</taxon>
    </lineage>
</organism>
<protein>
    <recommendedName>
        <fullName evidence="5">Small polypeptide DEVIL 12</fullName>
    </recommendedName>
    <alternativeName>
        <fullName evidence="6">Small polypeptide ROTUNDIFOLIA LIKE 22</fullName>
        <shortName evidence="6">Small polypeptide ROT-FOUR-LIKE 22</shortName>
    </alternativeName>
</protein>
<gene>
    <name evidence="5" type="primary">DVL12</name>
    <name evidence="6" type="synonym">RTFL22</name>
    <name evidence="8" type="ordered locus">At1g64585</name>
    <name evidence="9" type="ORF">F1N19</name>
</gene>
<sequence>MIVKLMGSNKDLHRQAKNNNNKLTPNRSLKETRSRLYIIRRCLVMLLCWREPRD</sequence>
<accession>Q6IM89</accession>
<feature type="chain" id="PRO_0000452780" description="Small polypeptide DEVIL 12">
    <location>
        <begin position="1"/>
        <end position="54"/>
    </location>
</feature>
<feature type="transmembrane region" description="Helical" evidence="3">
    <location>
        <begin position="31"/>
        <end position="48"/>
    </location>
</feature>
<feature type="region of interest" description="Required for DVL/RTFL small polypeptide activity" evidence="2">
    <location>
        <begin position="20"/>
        <end position="51"/>
    </location>
</feature>
<feature type="glycosylation site" description="N-linked (GlcNAc...) asparagine" evidence="4">
    <location>
        <position position="26"/>
    </location>
</feature>
<comment type="function">
    <text evidence="1">Small polypeptide acting as a regulatory molecule which coordinates cellular responses required for differentiation, growth and development, probably by restricting polar cell proliferation in lateral organs and coordinating socket cell recruitment and differentiation at trichome sites.</text>
</comment>
<comment type="subcellular location">
    <subcellularLocation>
        <location evidence="2">Cell membrane</location>
        <topology evidence="3">Single-pass membrane protein</topology>
    </subcellularLocation>
</comment>
<comment type="similarity">
    <text evidence="7">Belongs to the DVL/RTFL small polypeptides family.</text>
</comment>
<name>DVL12_ARATH</name>
<dbReference type="EMBL" id="BK001755">
    <property type="protein sequence ID" value="DAA02283.1"/>
    <property type="molecule type" value="Genomic_DNA"/>
</dbReference>
<dbReference type="EMBL" id="AC009519">
    <property type="status" value="NOT_ANNOTATED_CDS"/>
    <property type="molecule type" value="Genomic_DNA"/>
</dbReference>
<dbReference type="EMBL" id="CP002684">
    <property type="protein sequence ID" value="AEE34257.1"/>
    <property type="molecule type" value="Genomic_DNA"/>
</dbReference>
<dbReference type="RefSeq" id="NP_001077771.1">
    <property type="nucleotide sequence ID" value="NM_001084302.1"/>
</dbReference>
<dbReference type="SMR" id="Q6IM89"/>
<dbReference type="GlyCosmos" id="Q6IM89">
    <property type="glycosylation" value="1 site, No reported glycans"/>
</dbReference>
<dbReference type="GlyGen" id="Q6IM89">
    <property type="glycosylation" value="1 site"/>
</dbReference>
<dbReference type="PaxDb" id="3702-AT1G64585.1"/>
<dbReference type="EnsemblPlants" id="AT1G64585.1">
    <property type="protein sequence ID" value="AT1G64585.1"/>
    <property type="gene ID" value="AT1G64585"/>
</dbReference>
<dbReference type="GeneID" id="5007834"/>
<dbReference type="Gramene" id="AT1G64585.1">
    <property type="protein sequence ID" value="AT1G64585.1"/>
    <property type="gene ID" value="AT1G64585"/>
</dbReference>
<dbReference type="KEGG" id="ath:AT1G64585"/>
<dbReference type="Araport" id="AT1G64585"/>
<dbReference type="TAIR" id="AT1G64585">
    <property type="gene designation" value="RTFL22"/>
</dbReference>
<dbReference type="HOGENOM" id="CLU_150897_5_1_1"/>
<dbReference type="InParanoid" id="Q6IM89"/>
<dbReference type="OMA" id="CWREPRD"/>
<dbReference type="OrthoDB" id="1101572at2759"/>
<dbReference type="PhylomeDB" id="Q6IM89"/>
<dbReference type="PRO" id="PR:Q6IM89"/>
<dbReference type="Proteomes" id="UP000006548">
    <property type="component" value="Chromosome 1"/>
</dbReference>
<dbReference type="ExpressionAtlas" id="Q6IM89">
    <property type="expression patterns" value="baseline"/>
</dbReference>
<dbReference type="GO" id="GO:0005886">
    <property type="term" value="C:plasma membrane"/>
    <property type="evidence" value="ECO:0000250"/>
    <property type="project" value="UniProtKB"/>
</dbReference>
<dbReference type="GO" id="GO:0008285">
    <property type="term" value="P:negative regulation of cell population proliferation"/>
    <property type="evidence" value="ECO:0000250"/>
    <property type="project" value="UniProtKB"/>
</dbReference>
<dbReference type="GO" id="GO:0048367">
    <property type="term" value="P:shoot system development"/>
    <property type="evidence" value="ECO:0000250"/>
    <property type="project" value="TAIR"/>
</dbReference>
<dbReference type="InterPro" id="IPR012552">
    <property type="entry name" value="DVL"/>
</dbReference>
<dbReference type="InterPro" id="IPR051525">
    <property type="entry name" value="DVL_RTFL_regulatory"/>
</dbReference>
<dbReference type="PANTHER" id="PTHR33102">
    <property type="entry name" value="DVL19-RELATED-RELATED"/>
    <property type="match status" value="1"/>
</dbReference>
<dbReference type="Pfam" id="PF08137">
    <property type="entry name" value="DVL"/>
    <property type="match status" value="1"/>
</dbReference>
<reference key="1">
    <citation type="journal article" date="2004" name="Plant J.">
        <title>DVL, a novel class of small polypeptides: overexpression alters Arabidopsis development.</title>
        <authorList>
            <person name="Wen J."/>
            <person name="Lease K.A."/>
            <person name="Walker J.C."/>
        </authorList>
    </citation>
    <scope>NUCLEOTIDE SEQUENCE [GENOMIC DNA]</scope>
    <scope>GENE FAMILY</scope>
    <scope>NOMENCLATURE</scope>
    <source>
        <strain>cv. Columbia</strain>
    </source>
</reference>
<reference key="2">
    <citation type="journal article" date="2000" name="Nature">
        <title>Sequence and analysis of chromosome 1 of the plant Arabidopsis thaliana.</title>
        <authorList>
            <person name="Theologis A."/>
            <person name="Ecker J.R."/>
            <person name="Palm C.J."/>
            <person name="Federspiel N.A."/>
            <person name="Kaul S."/>
            <person name="White O."/>
            <person name="Alonso J."/>
            <person name="Altafi H."/>
            <person name="Araujo R."/>
            <person name="Bowman C.L."/>
            <person name="Brooks S.Y."/>
            <person name="Buehler E."/>
            <person name="Chan A."/>
            <person name="Chao Q."/>
            <person name="Chen H."/>
            <person name="Cheuk R.F."/>
            <person name="Chin C.W."/>
            <person name="Chung M.K."/>
            <person name="Conn L."/>
            <person name="Conway A.B."/>
            <person name="Conway A.R."/>
            <person name="Creasy T.H."/>
            <person name="Dewar K."/>
            <person name="Dunn P."/>
            <person name="Etgu P."/>
            <person name="Feldblyum T.V."/>
            <person name="Feng J.-D."/>
            <person name="Fong B."/>
            <person name="Fujii C.Y."/>
            <person name="Gill J.E."/>
            <person name="Goldsmith A.D."/>
            <person name="Haas B."/>
            <person name="Hansen N.F."/>
            <person name="Hughes B."/>
            <person name="Huizar L."/>
            <person name="Hunter J.L."/>
            <person name="Jenkins J."/>
            <person name="Johnson-Hopson C."/>
            <person name="Khan S."/>
            <person name="Khaykin E."/>
            <person name="Kim C.J."/>
            <person name="Koo H.L."/>
            <person name="Kremenetskaia I."/>
            <person name="Kurtz D.B."/>
            <person name="Kwan A."/>
            <person name="Lam B."/>
            <person name="Langin-Hooper S."/>
            <person name="Lee A."/>
            <person name="Lee J.M."/>
            <person name="Lenz C.A."/>
            <person name="Li J.H."/>
            <person name="Li Y.-P."/>
            <person name="Lin X."/>
            <person name="Liu S.X."/>
            <person name="Liu Z.A."/>
            <person name="Luros J.S."/>
            <person name="Maiti R."/>
            <person name="Marziali A."/>
            <person name="Militscher J."/>
            <person name="Miranda M."/>
            <person name="Nguyen M."/>
            <person name="Nierman W.C."/>
            <person name="Osborne B.I."/>
            <person name="Pai G."/>
            <person name="Peterson J."/>
            <person name="Pham P.K."/>
            <person name="Rizzo M."/>
            <person name="Rooney T."/>
            <person name="Rowley D."/>
            <person name="Sakano H."/>
            <person name="Salzberg S.L."/>
            <person name="Schwartz J.R."/>
            <person name="Shinn P."/>
            <person name="Southwick A.M."/>
            <person name="Sun H."/>
            <person name="Tallon L.J."/>
            <person name="Tambunga G."/>
            <person name="Toriumi M.J."/>
            <person name="Town C.D."/>
            <person name="Utterback T."/>
            <person name="Van Aken S."/>
            <person name="Vaysberg M."/>
            <person name="Vysotskaia V.S."/>
            <person name="Walker M."/>
            <person name="Wu D."/>
            <person name="Yu G."/>
            <person name="Fraser C.M."/>
            <person name="Venter J.C."/>
            <person name="Davis R.W."/>
        </authorList>
    </citation>
    <scope>NUCLEOTIDE SEQUENCE [LARGE SCALE GENOMIC DNA]</scope>
    <source>
        <strain>cv. Columbia</strain>
    </source>
</reference>
<reference key="3">
    <citation type="journal article" date="2017" name="Plant J.">
        <title>Araport11: a complete reannotation of the Arabidopsis thaliana reference genome.</title>
        <authorList>
            <person name="Cheng C.Y."/>
            <person name="Krishnakumar V."/>
            <person name="Chan A.P."/>
            <person name="Thibaud-Nissen F."/>
            <person name="Schobel S."/>
            <person name="Town C.D."/>
        </authorList>
    </citation>
    <scope>GENOME REANNOTATION</scope>
    <source>
        <strain>cv. Columbia</strain>
    </source>
</reference>
<reference key="4">
    <citation type="journal article" date="2004" name="Plant J.">
        <title>Overexpression of a novel small peptide ROTUNDIFOLIA4 decreases cell proliferation and alters leaf shape in Arabidopsis thaliana.</title>
        <authorList>
            <person name="Narita N.N."/>
            <person name="Moore S."/>
            <person name="Horiguchi G."/>
            <person name="Kubo M."/>
            <person name="Demura T."/>
            <person name="Fukuda H."/>
            <person name="Goodrich J."/>
            <person name="Tsukaya H."/>
        </authorList>
    </citation>
    <scope>GENE FAMILY</scope>
    <source>
        <strain>cv. Columbia</strain>
        <strain>cv. Landsberg erecta</strain>
    </source>
</reference>
<reference key="5">
    <citation type="journal article" date="2015" name="J. Plant Res.">
        <title>Comparative analysis of the RTFL peptide family on the control of plant organogenesis.</title>
        <authorList>
            <person name="Guo P."/>
            <person name="Yoshimura A."/>
            <person name="Ishikawa N."/>
            <person name="Yamaguchi T."/>
            <person name="Guo Y."/>
            <person name="Tsukaya H."/>
        </authorList>
    </citation>
    <scope>REVIEW</scope>
    <scope>GENE FAMILY</scope>
    <scope>NOMENCLATURE</scope>
    <source>
        <strain>cv. Columbia</strain>
    </source>
</reference>
<proteinExistence type="inferred from homology"/>